<proteinExistence type="evidence at protein level"/>
<comment type="function">
    <text evidence="2 6 9 11 12 14 16 17 19">Lipid transferase specifically expressed in white adipose tissue, which promotes unilocular lipid droplet formation by mediating lipid droplet fusion (PubMed:18334488, PubMed:22144693, PubMed:26733203, PubMed:30361435, PubMed:36477540). Lipid droplet fusion promotes their enlargement, restricting lipolysis and favoring lipid storage (PubMed:18334488, PubMed:18682832, PubMed:22144693, PubMed:26733203). Localizes on the lipid droplet surface, at focal contact sites between lipid droplets, and mediates atypical lipid droplet fusion by undergoing liquid-liquid phase separation (LLPS) and promoting directional net neutral lipid transfer from the smaller to larger lipid droplets (PubMed:18334488, PubMed:22144693). The transfer direction may be driven by the internal pressure difference between the contacting lipid droplet pair (PubMed:18334488, PubMed:22144693). Its role in neutral lipid transfer and lipid droplet enlargement is activated by the interaction with PLIN1 (PubMed:23481402). May also act as a CEBPB coactivator in the white adipose tissue to control the expression of a subset of CEBPB downstream target genes, including SOCS1, SOCS3, TGFB1, TGFBR1, ID2 and XDH (PubMed:22245780). When overexpressed in preadipocytes, induces apoptosis or increases cell susceptibility to apoptosis induced by serum deprivation or TGFB treatment (By similarity).</text>
</comment>
<comment type="catalytic activity">
    <reaction evidence="11">
        <text>a triacyl-sn-glycerol(in) = a triacyl-sn-glycerol(out)</text>
        <dbReference type="Rhea" id="RHEA:39011"/>
        <dbReference type="ChEBI" id="CHEBI:64615"/>
    </reaction>
</comment>
<comment type="subunit">
    <text evidence="1 2 12 14 15 18 19">Homodimer (PubMed:23481402, PubMed:24025675). Homooligomer; undergoes liquid-liquid phase separation (LLPS) via its N-terminus, facilitating lipid droplet fusion, occurs at the lipid droplet contact sites (PubMed:34508658). Interacts with CIDEA (By similarity). Interacts with PLIN1 (PubMed:23481402). Interacts with NFAT5; this interaction is direct and retains NFAT5 in the cytoplasm (By similarity). Interacts with CEBPB (PubMed:22245780). Interacts with isoform CLSTN3beta of CLSTN3; inhibiting the lipid transferase activity of CIDEC (PubMed:36477540).</text>
</comment>
<comment type="subcellular location">
    <subcellularLocation>
        <location evidence="6 8 10 11 16 17 18">Lipid droplet</location>
    </subcellularLocation>
    <subcellularLocation>
        <location evidence="10">Endoplasmic reticulum</location>
    </subcellularLocation>
    <subcellularLocation>
        <location evidence="12">Nucleus</location>
    </subcellularLocation>
    <text evidence="11 16 18">Diffuses quickly on lipid droplet surface, but becomes trapped and clustered at lipid droplet contact sites, thereby enabling its rapid enrichment at lipid droplet contact sites.</text>
</comment>
<comment type="tissue specificity">
    <text evidence="4 5 8 9 12 13">Expressed almost exclusively in adipose tissue, including subcutaneous and epididymal white adipose tissue (at protein level) (PubMed:12910269, PubMed:1339452, PubMed:18654663, PubMed:18682832, PubMed:22245780). Although abundantly present in brown adipose tissue at the mRNA level, the protein is almost undetectable in this tissue, or at moderate levels (PubMed:12910269, PubMed:18654663, PubMed:22245780). Expressed in the mammary gland, in stromal adipose tissue, but becomes undetectable at the end of pregnancy and during lactation (at protein level) (PubMed:22245780). Expressed at low levels in skeletal muscle and heart (PubMed:23233732).</text>
</comment>
<comment type="developmental stage">
    <text evidence="5 6 8 12">Up-regulated during differentiation into adipocytes in various cell lines, including TA1 and 3T3-L1 (PubMed:1339452, PubMed:18334488, PubMed:18654663, PubMed:22245780). Decreases in the mammary gland during pregnancy from day 14.5 until 18.5, when it becomes hardly detectable, and during lactation (PubMed:1339452, PubMed:18334488, PubMed:18654663, PubMed:22245780).</text>
</comment>
<comment type="induction">
    <text evidence="7 10 13">Up-regulated under conditions that enhance triacylglycerol deposition, including rosiglitazone treatment and high-fat diet (PubMed:18509062, PubMed:20089860). This up-regulation is mediated by PPARG (PubMed:20089860). Up-regulated by isoproterenol, a beta-agonist, and oleic acid treatment (PubMed:20089860). This induction is due to protein stabilization (PubMed:20089860). Down-regulated upon hypertonic conditions (PubMed:23233732).</text>
</comment>
<comment type="domain">
    <text evidence="17">The RKKR polybasic motif mediates binding to acidic phospholipids, such as phosphatidic acid, phosphatidylinositol and phosphatidylserine, inhibiting the ability to mediate lipid droplet fusion.</text>
</comment>
<comment type="domain">
    <text evidence="14">The CIDE-N domain is involved in homodimerization which is crucial for its function in promoting lipid exchange and transfer.</text>
</comment>
<comment type="PTM">
    <text evidence="10">Ubiquitinated and targeted to proteasomal degradation, resulting in a short half-life (about 15 minutes in 3T3-L1 cells) (PubMed:20089860). Protein stability depends on triaclyglycerol synthesis, fatty acid availability and lipid droplet formation (PubMed:20089860).</text>
</comment>
<comment type="disruption phenotype">
    <text evidence="8 9">Mutant animals are born in a Mendelian ratio and appear physically normal at birth (PubMed:18654663). Mice display increased energy expenditure, lower levels of plasma triglycerides and free fatty acids (PubMed:18654663, PubMed:18682832). The body weights of wild-type and mutant mice fed a standard diet do not differ up to 14 weeks of age, nor does food intake (PubMed:18654663). From 16 weeks of age, the body weight of mutant mice significantly decreases compared with that of wild-type mice (PubMed:18654663, PubMed:18682832). When animals are fed a high-fat diet, the gain in body weight is significantly smaller for mutant mice than for wild-type (PubMed:18654663). Under these feeding conditions, mutant mice are also protected from insulin resistance and from accumulation of fat in the liver (PubMed:18654663). The body temperature do not differ significantly between mutant and wild-type mice maintained at room temperature, but the basal rate of oxygen consumption is significantly increased in mutants (PubMed:18654663).</text>
</comment>
<comment type="similarity">
    <text evidence="22">Belongs to the CIDE family.</text>
</comment>
<sequence>MDYAMKSLSLLYPRSLSRHVAVSTAVVTQQLVSKPSRETPRARPCRVSTADRKVRKGIMAHSLEDLLNKVQDILKLKDKPFSLVLEEDGTIVETEEYFQALAKDTMFMVLLKGQKWKPPSEQRKKRAQLALSQKPTKKIDVARVTFDLYKLNPQDFIGCLNVKATLYDTYSLSYDLHCYKAKRIVKEMLRWTLFSMQATGHMLLGTSSYMQQFLDATEEEQPAKAKPSSLLPACLKMLQ</sequence>
<protein>
    <recommendedName>
        <fullName evidence="22">Lipid transferase CIDEC</fullName>
    </recommendedName>
    <alternativeName>
        <fullName evidence="22">Cell death-inducing DFFA-like effector protein C</fullName>
    </alternativeName>
    <alternativeName>
        <fullName evidence="20">Fat-specific protein FSP27</fullName>
    </alternativeName>
</protein>
<reference key="1">
    <citation type="journal article" date="1992" name="J. Biol. Chem.">
        <title>Cloning and transcriptional regulation of a novel adipocyte-specific gene, FSP27. CAAT-enhancer-binding protein (C/EBP) and C/EBP-like proteins interact with sequences required for differentiation-dependent expression.</title>
        <authorList>
            <person name="Danesch U."/>
            <person name="Hoeck W."/>
            <person name="Ringold G.M."/>
        </authorList>
    </citation>
    <scope>NUCLEOTIDE SEQUENCE [MRNA]</scope>
    <scope>TISSUE SPECIFICITY</scope>
    <scope>DEVELOPMENTAL STAGE</scope>
</reference>
<reference key="2">
    <citation type="journal article" date="2005" name="Science">
        <title>The transcriptional landscape of the mammalian genome.</title>
        <authorList>
            <person name="Carninci P."/>
            <person name="Kasukawa T."/>
            <person name="Katayama S."/>
            <person name="Gough J."/>
            <person name="Frith M.C."/>
            <person name="Maeda N."/>
            <person name="Oyama R."/>
            <person name="Ravasi T."/>
            <person name="Lenhard B."/>
            <person name="Wells C."/>
            <person name="Kodzius R."/>
            <person name="Shimokawa K."/>
            <person name="Bajic V.B."/>
            <person name="Brenner S.E."/>
            <person name="Batalov S."/>
            <person name="Forrest A.R."/>
            <person name="Zavolan M."/>
            <person name="Davis M.J."/>
            <person name="Wilming L.G."/>
            <person name="Aidinis V."/>
            <person name="Allen J.E."/>
            <person name="Ambesi-Impiombato A."/>
            <person name="Apweiler R."/>
            <person name="Aturaliya R.N."/>
            <person name="Bailey T.L."/>
            <person name="Bansal M."/>
            <person name="Baxter L."/>
            <person name="Beisel K.W."/>
            <person name="Bersano T."/>
            <person name="Bono H."/>
            <person name="Chalk A.M."/>
            <person name="Chiu K.P."/>
            <person name="Choudhary V."/>
            <person name="Christoffels A."/>
            <person name="Clutterbuck D.R."/>
            <person name="Crowe M.L."/>
            <person name="Dalla E."/>
            <person name="Dalrymple B.P."/>
            <person name="de Bono B."/>
            <person name="Della Gatta G."/>
            <person name="di Bernardo D."/>
            <person name="Down T."/>
            <person name="Engstrom P."/>
            <person name="Fagiolini M."/>
            <person name="Faulkner G."/>
            <person name="Fletcher C.F."/>
            <person name="Fukushima T."/>
            <person name="Furuno M."/>
            <person name="Futaki S."/>
            <person name="Gariboldi M."/>
            <person name="Georgii-Hemming P."/>
            <person name="Gingeras T.R."/>
            <person name="Gojobori T."/>
            <person name="Green R.E."/>
            <person name="Gustincich S."/>
            <person name="Harbers M."/>
            <person name="Hayashi Y."/>
            <person name="Hensch T.K."/>
            <person name="Hirokawa N."/>
            <person name="Hill D."/>
            <person name="Huminiecki L."/>
            <person name="Iacono M."/>
            <person name="Ikeo K."/>
            <person name="Iwama A."/>
            <person name="Ishikawa T."/>
            <person name="Jakt M."/>
            <person name="Kanapin A."/>
            <person name="Katoh M."/>
            <person name="Kawasawa Y."/>
            <person name="Kelso J."/>
            <person name="Kitamura H."/>
            <person name="Kitano H."/>
            <person name="Kollias G."/>
            <person name="Krishnan S.P."/>
            <person name="Kruger A."/>
            <person name="Kummerfeld S.K."/>
            <person name="Kurochkin I.V."/>
            <person name="Lareau L.F."/>
            <person name="Lazarevic D."/>
            <person name="Lipovich L."/>
            <person name="Liu J."/>
            <person name="Liuni S."/>
            <person name="McWilliam S."/>
            <person name="Madan Babu M."/>
            <person name="Madera M."/>
            <person name="Marchionni L."/>
            <person name="Matsuda H."/>
            <person name="Matsuzawa S."/>
            <person name="Miki H."/>
            <person name="Mignone F."/>
            <person name="Miyake S."/>
            <person name="Morris K."/>
            <person name="Mottagui-Tabar S."/>
            <person name="Mulder N."/>
            <person name="Nakano N."/>
            <person name="Nakauchi H."/>
            <person name="Ng P."/>
            <person name="Nilsson R."/>
            <person name="Nishiguchi S."/>
            <person name="Nishikawa S."/>
            <person name="Nori F."/>
            <person name="Ohara O."/>
            <person name="Okazaki Y."/>
            <person name="Orlando V."/>
            <person name="Pang K.C."/>
            <person name="Pavan W.J."/>
            <person name="Pavesi G."/>
            <person name="Pesole G."/>
            <person name="Petrovsky N."/>
            <person name="Piazza S."/>
            <person name="Reed J."/>
            <person name="Reid J.F."/>
            <person name="Ring B.Z."/>
            <person name="Ringwald M."/>
            <person name="Rost B."/>
            <person name="Ruan Y."/>
            <person name="Salzberg S.L."/>
            <person name="Sandelin A."/>
            <person name="Schneider C."/>
            <person name="Schoenbach C."/>
            <person name="Sekiguchi K."/>
            <person name="Semple C.A."/>
            <person name="Seno S."/>
            <person name="Sessa L."/>
            <person name="Sheng Y."/>
            <person name="Shibata Y."/>
            <person name="Shimada H."/>
            <person name="Shimada K."/>
            <person name="Silva D."/>
            <person name="Sinclair B."/>
            <person name="Sperling S."/>
            <person name="Stupka E."/>
            <person name="Sugiura K."/>
            <person name="Sultana R."/>
            <person name="Takenaka Y."/>
            <person name="Taki K."/>
            <person name="Tammoja K."/>
            <person name="Tan S.L."/>
            <person name="Tang S."/>
            <person name="Taylor M.S."/>
            <person name="Tegner J."/>
            <person name="Teichmann S.A."/>
            <person name="Ueda H.R."/>
            <person name="van Nimwegen E."/>
            <person name="Verardo R."/>
            <person name="Wei C.L."/>
            <person name="Yagi K."/>
            <person name="Yamanishi H."/>
            <person name="Zabarovsky E."/>
            <person name="Zhu S."/>
            <person name="Zimmer A."/>
            <person name="Hide W."/>
            <person name="Bult C."/>
            <person name="Grimmond S.M."/>
            <person name="Teasdale R.D."/>
            <person name="Liu E.T."/>
            <person name="Brusic V."/>
            <person name="Quackenbush J."/>
            <person name="Wahlestedt C."/>
            <person name="Mattick J.S."/>
            <person name="Hume D.A."/>
            <person name="Kai C."/>
            <person name="Sasaki D."/>
            <person name="Tomaru Y."/>
            <person name="Fukuda S."/>
            <person name="Kanamori-Katayama M."/>
            <person name="Suzuki M."/>
            <person name="Aoki J."/>
            <person name="Arakawa T."/>
            <person name="Iida J."/>
            <person name="Imamura K."/>
            <person name="Itoh M."/>
            <person name="Kato T."/>
            <person name="Kawaji H."/>
            <person name="Kawagashira N."/>
            <person name="Kawashima T."/>
            <person name="Kojima M."/>
            <person name="Kondo S."/>
            <person name="Konno H."/>
            <person name="Nakano K."/>
            <person name="Ninomiya N."/>
            <person name="Nishio T."/>
            <person name="Okada M."/>
            <person name="Plessy C."/>
            <person name="Shibata K."/>
            <person name="Shiraki T."/>
            <person name="Suzuki S."/>
            <person name="Tagami M."/>
            <person name="Waki K."/>
            <person name="Watahiki A."/>
            <person name="Okamura-Oho Y."/>
            <person name="Suzuki H."/>
            <person name="Kawai J."/>
            <person name="Hayashizaki Y."/>
        </authorList>
    </citation>
    <scope>NUCLEOTIDE SEQUENCE [LARGE SCALE MRNA]</scope>
    <source>
        <strain>C57BL/6J</strain>
    </source>
</reference>
<reference key="3">
    <citation type="journal article" date="2009" name="PLoS Biol.">
        <title>Lineage-specific biology revealed by a finished genome assembly of the mouse.</title>
        <authorList>
            <person name="Church D.M."/>
            <person name="Goodstadt L."/>
            <person name="Hillier L.W."/>
            <person name="Zody M.C."/>
            <person name="Goldstein S."/>
            <person name="She X."/>
            <person name="Bult C.J."/>
            <person name="Agarwala R."/>
            <person name="Cherry J.L."/>
            <person name="DiCuccio M."/>
            <person name="Hlavina W."/>
            <person name="Kapustin Y."/>
            <person name="Meric P."/>
            <person name="Maglott D."/>
            <person name="Birtle Z."/>
            <person name="Marques A.C."/>
            <person name="Graves T."/>
            <person name="Zhou S."/>
            <person name="Teague B."/>
            <person name="Potamousis K."/>
            <person name="Churas C."/>
            <person name="Place M."/>
            <person name="Herschleb J."/>
            <person name="Runnheim R."/>
            <person name="Forrest D."/>
            <person name="Amos-Landgraf J."/>
            <person name="Schwartz D.C."/>
            <person name="Cheng Z."/>
            <person name="Lindblad-Toh K."/>
            <person name="Eichler E.E."/>
            <person name="Ponting C.P."/>
        </authorList>
    </citation>
    <scope>NUCLEOTIDE SEQUENCE [LARGE SCALE GENOMIC DNA]</scope>
    <source>
        <strain>C57BL/6J</strain>
    </source>
</reference>
<reference key="4">
    <citation type="journal article" date="2004" name="Genome Res.">
        <title>The status, quality, and expansion of the NIH full-length cDNA project: the Mammalian Gene Collection (MGC).</title>
        <authorList>
            <consortium name="The MGC Project Team"/>
        </authorList>
    </citation>
    <scope>NUCLEOTIDE SEQUENCE [LARGE SCALE MRNA]</scope>
    <source>
        <strain>FVB/N</strain>
        <tissue>Kidney</tissue>
    </source>
</reference>
<reference key="5">
    <citation type="journal article" date="2003" name="Nat. Genet.">
        <title>Cidea-deficient mice have lean phenotype and are resistant to obesity.</title>
        <authorList>
            <person name="Zhou Z."/>
            <person name="Yon Toh S."/>
            <person name="Chen Z."/>
            <person name="Guo K."/>
            <person name="Ng C.P."/>
            <person name="Ponniah S."/>
            <person name="Lin S.C."/>
            <person name="Hong W."/>
            <person name="Li P."/>
        </authorList>
    </citation>
    <scope>TISSUE SPECIFICITY</scope>
</reference>
<reference key="6">
    <citation type="journal article" date="2008" name="J. Biol. Chem.">
        <title>Fat-specific protein 27 regulates storage of triacylglycerol.</title>
        <authorList>
            <person name="Keller P."/>
            <person name="Petrie J.T."/>
            <person name="De Rose P."/>
            <person name="Gerin I."/>
            <person name="Wright W.S."/>
            <person name="Chiang S.H."/>
            <person name="Nielsen A.R."/>
            <person name="Fischer C.P."/>
            <person name="Pedersen B.K."/>
            <person name="MacDougald O.A."/>
        </authorList>
    </citation>
    <scope>FUNCTION</scope>
    <scope>SUBCELLULAR LOCATION</scope>
    <scope>DEVELOPMENTAL STAGE</scope>
</reference>
<reference key="7">
    <citation type="journal article" date="2008" name="J. Clin. Invest.">
        <title>FSP27 contributes to efficient energy storage in murine white adipocytes by promoting the formation of unilocular lipid droplets.</title>
        <authorList>
            <person name="Nishino N."/>
            <person name="Tamori Y."/>
            <person name="Tateya S."/>
            <person name="Kawaguchi T."/>
            <person name="Shibakusa T."/>
            <person name="Mizunoya W."/>
            <person name="Inoue K."/>
            <person name="Kitazawa R."/>
            <person name="Kitazawa S."/>
            <person name="Matsuki Y."/>
            <person name="Hiramatsu R."/>
            <person name="Masubuchi S."/>
            <person name="Omachi A."/>
            <person name="Kimura K."/>
            <person name="Saito M."/>
            <person name="Amo T."/>
            <person name="Ohta S."/>
            <person name="Yamaguchi T."/>
            <person name="Osumi T."/>
            <person name="Cheng J."/>
            <person name="Fujimoto T."/>
            <person name="Nakao H."/>
            <person name="Nakao K."/>
            <person name="Aiba A."/>
            <person name="Okamura H."/>
            <person name="Fushiki T."/>
            <person name="Kasuga M."/>
        </authorList>
    </citation>
    <scope>SUBCELLULAR LOCATION</scope>
    <scope>TISSUE SPECIFICITY</scope>
    <scope>DEVELOPMENTAL STAGE</scope>
    <scope>DISRUPTION PHENOTYPE</scope>
</reference>
<reference key="8">
    <citation type="journal article" date="2008" name="PLoS ONE">
        <title>Up-regulation of mitochondrial activity and acquirement of brown adipose tissue-like property in the white adipose tissue of fsp27 deficient mice.</title>
        <authorList>
            <person name="Toh S.Y."/>
            <person name="Gong J."/>
            <person name="Du G."/>
            <person name="Li J.Z."/>
            <person name="Yang S."/>
            <person name="Ye J."/>
            <person name="Yao H."/>
            <person name="Zhang Y."/>
            <person name="Xue B."/>
            <person name="Li Q."/>
            <person name="Yang H."/>
            <person name="Wen Z."/>
            <person name="Li P."/>
        </authorList>
    </citation>
    <scope>FUNCTION</scope>
    <scope>DISRUPTION PHENOTYPE</scope>
    <scope>TISSUE SPECIFICITY</scope>
</reference>
<reference key="9">
    <citation type="journal article" date="2008" name="Proc. Natl. Acad. Sci. U.S.A.">
        <title>Cidea is associated with lipid droplets and insulin sensitivity in humans.</title>
        <authorList>
            <person name="Puri V."/>
            <person name="Ranjit S."/>
            <person name="Konda S."/>
            <person name="Nicoloro S.M."/>
            <person name="Straubhaar J."/>
            <person name="Chawla A."/>
            <person name="Chouinard M."/>
            <person name="Lin C."/>
            <person name="Burkart A."/>
            <person name="Corvera S."/>
            <person name="Perugini R.A."/>
            <person name="Czech M.P."/>
        </authorList>
    </citation>
    <scope>INDUCTION</scope>
</reference>
<reference key="10">
    <citation type="journal article" date="2010" name="J. Biol. Chem.">
        <title>Fat-specific protein 27 undergoes ubiquitin-dependent degradation regulated by triacylglycerol synthesis and lipid droplet formation.</title>
        <authorList>
            <person name="Nian Z."/>
            <person name="Sun Z."/>
            <person name="Yu L."/>
            <person name="Toh S.Y."/>
            <person name="Sang J."/>
            <person name="Li P."/>
        </authorList>
    </citation>
    <scope>SUBCELLULAR LOCATION</scope>
    <scope>UBIQUITINATION</scope>
    <scope>INDUCTION</scope>
    <scope>MUTAGENESIS OF LYS-224; LYS-226 AND LYS-236</scope>
</reference>
<reference key="11">
    <citation type="journal article" date="2011" name="J. Cell Biol.">
        <title>Fsp27 promotes lipid droplet growth by lipid exchange and transfer at lipid droplet contact sites.</title>
        <authorList>
            <person name="Gong J."/>
            <person name="Sun Z."/>
            <person name="Wu L."/>
            <person name="Xu W."/>
            <person name="Schieber N."/>
            <person name="Xu D."/>
            <person name="Shui G."/>
            <person name="Yang H."/>
            <person name="Parton R.G."/>
            <person name="Li P."/>
        </authorList>
    </citation>
    <scope>FUNCTION</scope>
    <scope>TRANSPORTER ACTIVITY</scope>
    <scope>SUBCELLULAR LOCATION</scope>
    <scope>MUTAGENESIS OF LYS-182; LYS-186 AND ARG-190</scope>
</reference>
<reference key="12">
    <citation type="journal article" date="2012" name="Nat. Med.">
        <title>Cidea is an essential transcriptional coactivator regulating mammary gland secretion of milk lipids.</title>
        <authorList>
            <person name="Wang W."/>
            <person name="Lv N."/>
            <person name="Zhang S."/>
            <person name="Shui G."/>
            <person name="Qian H."/>
            <person name="Zhang J."/>
            <person name="Chen Y."/>
            <person name="Ye J."/>
            <person name="Xie Y."/>
            <person name="Shen Y."/>
            <person name="Wenk M.R."/>
            <person name="Li P."/>
        </authorList>
    </citation>
    <scope>FUNCTION AS A CEBPB COACTIVATOR</scope>
    <scope>INTERACTION WITH CEBPB</scope>
    <scope>SUBCELLULAR LOCATION</scope>
    <scope>TISSUE SPECIFICITY</scope>
    <scope>DEVELOPMENTAL STAGE</scope>
</reference>
<reference key="13">
    <citation type="journal article" date="2013" name="J. Lipid Res.">
        <title>Fat-specific protein 27 modulates nuclear factor of activated T cells 5 and the cellular response to stress.</title>
        <authorList>
            <person name="Ueno M."/>
            <person name="Shen W.J."/>
            <person name="Patel S."/>
            <person name="Greenberg A.S."/>
            <person name="Azhar S."/>
            <person name="Kraemer F.B."/>
        </authorList>
    </citation>
    <scope>TISSUE SPECIFICITY</scope>
    <scope>INDUCTION BY OSMOTIC STRESS</scope>
</reference>
<reference key="14">
    <citation type="journal article" date="2016" name="J. Biol. Chem.">
        <title>Differential roles of cell death-inducing DNA fragmentation factor-alpha-like effector (CIDE) proteins in promoting lipid droplet fusion and growth in subpopulations of hepatocytes.</title>
        <authorList>
            <person name="Xu W."/>
            <person name="Wu L."/>
            <person name="Yu M."/>
            <person name="Chen F.J."/>
            <person name="Arshad M."/>
            <person name="Xia X."/>
            <person name="Ren H."/>
            <person name="Yu J."/>
            <person name="Xu L."/>
            <person name="Xu D."/>
            <person name="Li J.Z."/>
            <person name="Li P."/>
            <person name="Zhou L."/>
        </authorList>
    </citation>
    <scope>FUNCTION</scope>
    <scope>SUBCELLULAR LOCATION</scope>
</reference>
<reference key="15">
    <citation type="journal article" date="2018" name="J. Biol. Chem.">
        <title>Polybasic RKKR motif in the linker region of lipid droplet (LD)-associated protein CIDEC inhibits LD fusion activity by interacting with acidic phospholipids.</title>
        <authorList>
            <person name="Wang J."/>
            <person name="Yan C."/>
            <person name="Xu C."/>
            <person name="Chua B.T."/>
            <person name="Li P."/>
            <person name="Chen F.J."/>
        </authorList>
    </citation>
    <scope>FUNCTION</scope>
    <scope>SUBCELLULAR LOCATION</scope>
    <scope>DOMAIN</scope>
    <scope>MUTAGENESIS OF GLU-121; GLN-122; 123-ARG--ARG-126; ARG-123; LYS-124; 125-LYS-ARG-126; LYS-125; ARG-126; GLN-128; ALA-130; LEU-131; SER-132 AND LYS-134</scope>
</reference>
<reference key="16">
    <citation type="journal article" date="2021" name="Dev. Cell">
        <title>A gel-like condensation of Cidec generates lipid-permeable plates for lipid droplet fusion.</title>
        <authorList>
            <person name="Lyu X."/>
            <person name="Wang J."/>
            <person name="Wang J."/>
            <person name="Yin Y.S."/>
            <person name="Zhu Y."/>
            <person name="Li L.L."/>
            <person name="Huang S."/>
            <person name="Peng S."/>
            <person name="Xue B."/>
            <person name="Liao R."/>
            <person name="Wang S.Q."/>
            <person name="Long M."/>
            <person name="Wohland T."/>
            <person name="Chua B.T."/>
            <person name="Sun Y."/>
            <person name="Li P."/>
            <person name="Chen X.W."/>
            <person name="Xu L."/>
            <person name="Chen F.J."/>
            <person name="Li P."/>
        </authorList>
    </citation>
    <scope>FUNCTION</scope>
    <scope>SUBUNIT</scope>
    <scope>SUBCELLULAR LOCATION</scope>
    <scope>MUTAGENESIS OF 1-MET--PRO-40 AND 86-GLU--ASP-88</scope>
</reference>
<reference key="17">
    <citation type="journal article" date="2022" name="Nature">
        <title>CLSTN3beta enforces adipocyte multilocularity to facilitate lipid utilization.</title>
        <authorList>
            <person name="Qian K."/>
            <person name="Tol M.J."/>
            <person name="Wu J."/>
            <person name="Uchiyama L.F."/>
            <person name="Xiao X."/>
            <person name="Cui L."/>
            <person name="Bedard A.H."/>
            <person name="Weston T.A."/>
            <person name="Rajendran P.S."/>
            <person name="Vergnes L."/>
            <person name="Shimanaka Y."/>
            <person name="Yin Y."/>
            <person name="Jami-Alahmadi Y."/>
            <person name="Cohn W."/>
            <person name="Bajar B.T."/>
            <person name="Lin C.H."/>
            <person name="Jin B."/>
            <person name="DeNardo L.A."/>
            <person name="Black D.L."/>
            <person name="Whitelegge J.P."/>
            <person name="Wohlschlegel J.A."/>
            <person name="Reue K."/>
            <person name="Shivkumar K."/>
            <person name="Chen F.J."/>
            <person name="Young S.G."/>
            <person name="Li P."/>
            <person name="Tontonoz P."/>
        </authorList>
    </citation>
    <scope>FUNCTION</scope>
    <scope>INTERACTION WITH CLSTN3BETA OF CLSTN3</scope>
</reference>
<reference evidence="24" key="18">
    <citation type="journal article" date="2013" name="Biochem. Biophys. Res. Commun.">
        <title>Molecular basis for homo-dimerization of the CIDE domain revealed by the crystal structure of the CIDE-N domain of FSP27.</title>
        <authorList>
            <person name="Lee S.M."/>
            <person name="Jang T.H."/>
            <person name="Park H.H."/>
        </authorList>
    </citation>
    <scope>X-RAY CRYSTALLOGRAPHY (2.00 ANGSTROMS) OF 32-120</scope>
    <scope>SUBUNIT</scope>
</reference>
<reference key="19">
    <citation type="journal article" date="2013" name="Nat. Commun.">
        <title>Perilipin1 promotes unilocular lipid droplet formation through the activation of Fsp27 in adipocytes.</title>
        <authorList>
            <person name="Sun Z."/>
            <person name="Gong J."/>
            <person name="Wu H."/>
            <person name="Xu W."/>
            <person name="Wu L."/>
            <person name="Xu D."/>
            <person name="Gao J."/>
            <person name="Wu J.W."/>
            <person name="Yang H."/>
            <person name="Yang M."/>
            <person name="Li P."/>
        </authorList>
    </citation>
    <scope>X-RAY CRYSTALLOGRAPHY (1.93 ANGSTROMS) OF 39-118</scope>
    <scope>FUNCTION IN UNILOCULAR LIPID DROPLET FORMATION</scope>
    <scope>SUBUNIT</scope>
    <scope>INTERACTION WITH PLIN1</scope>
    <scope>SUBCELLULAR LOCATION</scope>
    <scope>MUTAGENESIS OF ARG-46; LYS-53; ARG-55; LYS-75; LYS-77; 86-GLU--ASP-88; 87-GLU-ASP-88; LYS-112; LYS-115 AND LYS-117</scope>
</reference>
<dbReference type="EMBL" id="M61737">
    <property type="status" value="NOT_ANNOTATED_CDS"/>
    <property type="molecule type" value="mRNA"/>
</dbReference>
<dbReference type="EMBL" id="AK080133">
    <property type="protein sequence ID" value="BAC37830.1"/>
    <property type="molecule type" value="mRNA"/>
</dbReference>
<dbReference type="EMBL" id="AC153910">
    <property type="status" value="NOT_ANNOTATED_CDS"/>
    <property type="molecule type" value="Genomic_DNA"/>
</dbReference>
<dbReference type="EMBL" id="BC099676">
    <property type="protein sequence ID" value="AAH99676.1"/>
    <property type="molecule type" value="mRNA"/>
</dbReference>
<dbReference type="CCDS" id="CCDS20418.1"/>
<dbReference type="PIR" id="A42445">
    <property type="entry name" value="A42445"/>
</dbReference>
<dbReference type="RefSeq" id="NP_001288224.1">
    <property type="nucleotide sequence ID" value="NM_001301295.1"/>
</dbReference>
<dbReference type="RefSeq" id="NP_848460.1">
    <property type="nucleotide sequence ID" value="NM_178373.4"/>
</dbReference>
<dbReference type="PDB" id="4IKG">
    <property type="method" value="X-ray"/>
    <property type="resolution" value="1.93 A"/>
    <property type="chains" value="A=39-118"/>
</dbReference>
<dbReference type="PDB" id="4MAC">
    <property type="method" value="X-ray"/>
    <property type="resolution" value="2.00 A"/>
    <property type="chains" value="A/B=32-120"/>
</dbReference>
<dbReference type="PDBsum" id="4IKG"/>
<dbReference type="PDBsum" id="4MAC"/>
<dbReference type="SMR" id="P56198"/>
<dbReference type="BioGRID" id="199749">
    <property type="interactions" value="1"/>
</dbReference>
<dbReference type="FunCoup" id="P56198">
    <property type="interactions" value="103"/>
</dbReference>
<dbReference type="IntAct" id="P56198">
    <property type="interactions" value="1"/>
</dbReference>
<dbReference type="MINT" id="P56198"/>
<dbReference type="STRING" id="10090.ENSMUSP00000108712"/>
<dbReference type="iPTMnet" id="P56198"/>
<dbReference type="PhosphoSitePlus" id="P56198"/>
<dbReference type="PaxDb" id="10090-ENSMUSP00000032416"/>
<dbReference type="ProteomicsDB" id="283557"/>
<dbReference type="Antibodypedia" id="10363">
    <property type="antibodies" value="306 antibodies from 33 providers"/>
</dbReference>
<dbReference type="DNASU" id="14311"/>
<dbReference type="Ensembl" id="ENSMUST00000032416.11">
    <property type="protein sequence ID" value="ENSMUSP00000032416.5"/>
    <property type="gene ID" value="ENSMUSG00000030278.12"/>
</dbReference>
<dbReference type="Ensembl" id="ENSMUST00000113089.8">
    <property type="protein sequence ID" value="ENSMUSP00000108712.2"/>
    <property type="gene ID" value="ENSMUSG00000030278.12"/>
</dbReference>
<dbReference type="GeneID" id="14311"/>
<dbReference type="KEGG" id="mmu:14311"/>
<dbReference type="UCSC" id="uc009dgb.2">
    <property type="organism name" value="mouse"/>
</dbReference>
<dbReference type="AGR" id="MGI:95585"/>
<dbReference type="CTD" id="63924"/>
<dbReference type="MGI" id="MGI:95585">
    <property type="gene designation" value="Cidec"/>
</dbReference>
<dbReference type="VEuPathDB" id="HostDB:ENSMUSG00000030278"/>
<dbReference type="eggNOG" id="ENOG502QU28">
    <property type="taxonomic scope" value="Eukaryota"/>
</dbReference>
<dbReference type="GeneTree" id="ENSGT00390000018596"/>
<dbReference type="HOGENOM" id="CLU_090011_1_0_1"/>
<dbReference type="InParanoid" id="P56198"/>
<dbReference type="TreeFam" id="TF334321"/>
<dbReference type="Reactome" id="R-MMU-8964572">
    <property type="pathway name" value="Lipid particle organization"/>
</dbReference>
<dbReference type="BioGRID-ORCS" id="14311">
    <property type="hits" value="4 hits in 79 CRISPR screens"/>
</dbReference>
<dbReference type="ChiTaRS" id="Cidec">
    <property type="organism name" value="mouse"/>
</dbReference>
<dbReference type="EvolutionaryTrace" id="P56198"/>
<dbReference type="PRO" id="PR:P56198"/>
<dbReference type="Proteomes" id="UP000000589">
    <property type="component" value="Chromosome 6"/>
</dbReference>
<dbReference type="RNAct" id="P56198">
    <property type="molecule type" value="protein"/>
</dbReference>
<dbReference type="Bgee" id="ENSMUSG00000030278">
    <property type="expression patterns" value="Expressed in epididymal fat pad and 88 other cell types or tissues"/>
</dbReference>
<dbReference type="ExpressionAtlas" id="P56198">
    <property type="expression patterns" value="baseline and differential"/>
</dbReference>
<dbReference type="GO" id="GO:0005829">
    <property type="term" value="C:cytosol"/>
    <property type="evidence" value="ECO:0000250"/>
    <property type="project" value="UniProtKB"/>
</dbReference>
<dbReference type="GO" id="GO:0005783">
    <property type="term" value="C:endoplasmic reticulum"/>
    <property type="evidence" value="ECO:0007669"/>
    <property type="project" value="UniProtKB-SubCell"/>
</dbReference>
<dbReference type="GO" id="GO:0005811">
    <property type="term" value="C:lipid droplet"/>
    <property type="evidence" value="ECO:0000314"/>
    <property type="project" value="UniProtKB"/>
</dbReference>
<dbReference type="GO" id="GO:0005634">
    <property type="term" value="C:nucleus"/>
    <property type="evidence" value="ECO:0007669"/>
    <property type="project" value="UniProtKB-SubCell"/>
</dbReference>
<dbReference type="GO" id="GO:0120013">
    <property type="term" value="F:lipid transfer activity"/>
    <property type="evidence" value="ECO:0000314"/>
    <property type="project" value="UniProtKB"/>
</dbReference>
<dbReference type="GO" id="GO:0140693">
    <property type="term" value="F:molecular condensate scaffold activity"/>
    <property type="evidence" value="ECO:0000314"/>
    <property type="project" value="UniProtKB"/>
</dbReference>
<dbReference type="GO" id="GO:0070300">
    <property type="term" value="F:phosphatidic acid binding"/>
    <property type="evidence" value="ECO:0000314"/>
    <property type="project" value="UniProtKB"/>
</dbReference>
<dbReference type="GO" id="GO:0035091">
    <property type="term" value="F:phosphatidylinositol binding"/>
    <property type="evidence" value="ECO:0000314"/>
    <property type="project" value="UniProtKB"/>
</dbReference>
<dbReference type="GO" id="GO:0001786">
    <property type="term" value="F:phosphatidylserine binding"/>
    <property type="evidence" value="ECO:0000314"/>
    <property type="project" value="UniProtKB"/>
</dbReference>
<dbReference type="GO" id="GO:0006915">
    <property type="term" value="P:apoptotic process"/>
    <property type="evidence" value="ECO:0000266"/>
    <property type="project" value="MGI"/>
</dbReference>
<dbReference type="GO" id="GO:0097194">
    <property type="term" value="P:execution phase of apoptosis"/>
    <property type="evidence" value="ECO:0000250"/>
    <property type="project" value="UniProtKB"/>
</dbReference>
<dbReference type="GO" id="GO:0160077">
    <property type="term" value="P:lipid droplet fusion"/>
    <property type="evidence" value="ECO:0000314"/>
    <property type="project" value="UniProtKB"/>
</dbReference>
<dbReference type="GO" id="GO:0019915">
    <property type="term" value="P:lipid storage"/>
    <property type="evidence" value="ECO:0000314"/>
    <property type="project" value="UniProtKB"/>
</dbReference>
<dbReference type="GO" id="GO:0050995">
    <property type="term" value="P:negative regulation of lipid catabolic process"/>
    <property type="evidence" value="ECO:0000314"/>
    <property type="project" value="UniProtKB"/>
</dbReference>
<dbReference type="GO" id="GO:0090209">
    <property type="term" value="P:negative regulation of triglyceride metabolic process"/>
    <property type="evidence" value="ECO:0000315"/>
    <property type="project" value="UniProtKB"/>
</dbReference>
<dbReference type="FunFam" id="3.10.20.10:FF:000004">
    <property type="entry name" value="cell death activator CIDE-3 isoform X1"/>
    <property type="match status" value="1"/>
</dbReference>
<dbReference type="Gene3D" id="3.10.20.10">
    <property type="match status" value="1"/>
</dbReference>
<dbReference type="IDEAL" id="IID50320"/>
<dbReference type="InterPro" id="IPR003508">
    <property type="entry name" value="CIDE-N_dom"/>
</dbReference>
<dbReference type="PANTHER" id="PTHR12306">
    <property type="entry name" value="CELL DEATH ACTIVATOR CIDE"/>
    <property type="match status" value="1"/>
</dbReference>
<dbReference type="PANTHER" id="PTHR12306:SF9">
    <property type="entry name" value="LIPID TRANSFERASE CIDEC"/>
    <property type="match status" value="1"/>
</dbReference>
<dbReference type="Pfam" id="PF02017">
    <property type="entry name" value="CIDE-N"/>
    <property type="match status" value="1"/>
</dbReference>
<dbReference type="SMART" id="SM00266">
    <property type="entry name" value="CAD"/>
    <property type="match status" value="1"/>
</dbReference>
<dbReference type="SUPFAM" id="SSF54277">
    <property type="entry name" value="CAD &amp; PB1 domains"/>
    <property type="match status" value="1"/>
</dbReference>
<dbReference type="PROSITE" id="PS51135">
    <property type="entry name" value="CIDE_N"/>
    <property type="match status" value="1"/>
</dbReference>
<gene>
    <name evidence="21 23" type="primary">Cidec</name>
    <name evidence="20" type="synonym">Fsp27</name>
</gene>
<accession>P56198</accession>
<accession>Q499X5</accession>
<accession>Q8BNV7</accession>
<evidence type="ECO:0000250" key="1">
    <source>
        <dbReference type="UniProtKB" id="Q5XI33"/>
    </source>
</evidence>
<evidence type="ECO:0000250" key="2">
    <source>
        <dbReference type="UniProtKB" id="Q96AQ7"/>
    </source>
</evidence>
<evidence type="ECO:0000255" key="3">
    <source>
        <dbReference type="PROSITE-ProRule" id="PRU00447"/>
    </source>
</evidence>
<evidence type="ECO:0000269" key="4">
    <source>
    </source>
</evidence>
<evidence type="ECO:0000269" key="5">
    <source>
    </source>
</evidence>
<evidence type="ECO:0000269" key="6">
    <source>
    </source>
</evidence>
<evidence type="ECO:0000269" key="7">
    <source>
    </source>
</evidence>
<evidence type="ECO:0000269" key="8">
    <source>
    </source>
</evidence>
<evidence type="ECO:0000269" key="9">
    <source>
    </source>
</evidence>
<evidence type="ECO:0000269" key="10">
    <source>
    </source>
</evidence>
<evidence type="ECO:0000269" key="11">
    <source>
    </source>
</evidence>
<evidence type="ECO:0000269" key="12">
    <source>
    </source>
</evidence>
<evidence type="ECO:0000269" key="13">
    <source>
    </source>
</evidence>
<evidence type="ECO:0000269" key="14">
    <source>
    </source>
</evidence>
<evidence type="ECO:0000269" key="15">
    <source>
    </source>
</evidence>
<evidence type="ECO:0000269" key="16">
    <source>
    </source>
</evidence>
<evidence type="ECO:0000269" key="17">
    <source>
    </source>
</evidence>
<evidence type="ECO:0000269" key="18">
    <source>
    </source>
</evidence>
<evidence type="ECO:0000269" key="19">
    <source>
    </source>
</evidence>
<evidence type="ECO:0000303" key="20">
    <source>
    </source>
</evidence>
<evidence type="ECO:0000303" key="21">
    <source>
    </source>
</evidence>
<evidence type="ECO:0000305" key="22"/>
<evidence type="ECO:0000312" key="23">
    <source>
        <dbReference type="MGI" id="MGI:95585"/>
    </source>
</evidence>
<evidence type="ECO:0007744" key="24">
    <source>
        <dbReference type="PDB" id="4MAC"/>
    </source>
</evidence>
<evidence type="ECO:0007829" key="25">
    <source>
        <dbReference type="PDB" id="4IKG"/>
    </source>
</evidence>
<keyword id="KW-0002">3D-structure</keyword>
<keyword id="KW-0010">Activator</keyword>
<keyword id="KW-0053">Apoptosis</keyword>
<keyword id="KW-0256">Endoplasmic reticulum</keyword>
<keyword id="KW-0551">Lipid droplet</keyword>
<keyword id="KW-0445">Lipid transport</keyword>
<keyword id="KW-0539">Nucleus</keyword>
<keyword id="KW-1185">Reference proteome</keyword>
<keyword id="KW-0804">Transcription</keyword>
<keyword id="KW-0805">Transcription regulation</keyword>
<keyword id="KW-0813">Transport</keyword>
<keyword id="KW-0832">Ubl conjugation</keyword>
<feature type="chain" id="PRO_0000144723" description="Lipid transferase CIDEC">
    <location>
        <begin position="1"/>
        <end position="239"/>
    </location>
</feature>
<feature type="domain" description="CIDE-N" evidence="3">
    <location>
        <begin position="41"/>
        <end position="118"/>
    </location>
</feature>
<feature type="region of interest" description="Required for liquid-liquid phase separation (LLPS)" evidence="18">
    <location>
        <begin position="1"/>
        <end position="35"/>
    </location>
</feature>
<feature type="short sequence motif" description="RKKR polybasic motif" evidence="17">
    <location>
        <begin position="123"/>
        <end position="126"/>
    </location>
</feature>
<feature type="mutagenesis site" description="Abolished ability to undergo liquid-liquid phase separation (LLPS)." evidence="18">
    <location>
        <begin position="1"/>
        <end position="40"/>
    </location>
</feature>
<feature type="mutagenesis site" description="Abolishes CIDE-N/CIDE-N interaction between the 2 homodimer subunits." evidence="14">
    <original>R</original>
    <variation>E</variation>
    <location>
        <position position="46"/>
    </location>
</feature>
<feature type="mutagenesis site" description="Slightly inhibits interaction with PLIN1." evidence="14">
    <original>K</original>
    <variation>A</variation>
    <location>
        <position position="53"/>
    </location>
</feature>
<feature type="mutagenesis site" description="Abolishes CIDE-N/CIDE-N interaction between the 2 homodimer subunits." evidence="14">
    <original>R</original>
    <variation>E</variation>
    <location>
        <position position="55"/>
    </location>
</feature>
<feature type="mutagenesis site" description="Inhibits interaction with PLIN1; when associated with A-77." evidence="14">
    <original>K</original>
    <variation>A</variation>
    <location>
        <position position="75"/>
    </location>
</feature>
<feature type="mutagenesis site" description="Inhibits interaction with PLIN1; when associated with A-75." evidence="14">
    <original>K</original>
    <variation>A</variation>
    <location>
        <position position="77"/>
    </location>
</feature>
<feature type="mutagenesis site" description="Abolishes CIDE-N/CIDE-N interaction between the 2 homodimer subunits and inhibits lipid droplet enlargement. No effect on homodimerization." evidence="14 18">
    <original>EED</original>
    <variation>QQN</variation>
    <location>
        <begin position="86"/>
        <end position="88"/>
    </location>
</feature>
<feature type="mutagenesis site" description="Reduces CIDE-N/CIDE-N interaction between the 2 homodimer subunits and inhibits lipid droplet enlargement." evidence="14">
    <original>ED</original>
    <variation>QN</variation>
    <location>
        <begin position="87"/>
        <end position="88"/>
    </location>
</feature>
<feature type="mutagenesis site" description="Slightly inhibits interaction with PLIN1; when associated with A-115." evidence="14">
    <original>K</original>
    <variation>A</variation>
    <location>
        <position position="112"/>
    </location>
</feature>
<feature type="mutagenesis site" description="Slightly inhibits interaction with PLIN1; when associated with A-112 or A-117." evidence="14">
    <original>K</original>
    <variation>A</variation>
    <location>
        <position position="115"/>
    </location>
</feature>
<feature type="mutagenesis site" description="Slightly inhibits interaction with PLIN1; when associated with A-115." evidence="14">
    <original>K</original>
    <variation>A</variation>
    <location>
        <position position="117"/>
    </location>
</feature>
<feature type="mutagenesis site" description="Abolished ability to mediate lipid droplet fusion." evidence="17">
    <original>E</original>
    <variation>Q</variation>
    <location>
        <position position="121"/>
    </location>
</feature>
<feature type="mutagenesis site" description="Abolished ability to mediate lipid droplet fusion." evidence="17">
    <original>Q</original>
    <variation>A</variation>
    <location>
        <position position="122"/>
    </location>
</feature>
<feature type="mutagenesis site" description="Abolished ability to bind acidic phospholipids and inhibit lipid droplet fusion." evidence="17">
    <original>RKKR</original>
    <variation>AAAA</variation>
    <location>
        <begin position="123"/>
        <end position="126"/>
    </location>
</feature>
<feature type="mutagenesis site" description="Does not affect ability to mediate lipid droplet fusion." evidence="17">
    <original>R</original>
    <variation>A</variation>
    <location>
        <position position="123"/>
    </location>
</feature>
<feature type="mutagenesis site" description="Does not affect ability to mediate lipid droplet fusion." evidence="17">
    <original>K</original>
    <variation>A</variation>
    <location>
        <position position="124"/>
    </location>
</feature>
<feature type="mutagenesis site" description="Abolished ability to bind acidic phospholipids and inhibit lipid droplet fusion." evidence="17">
    <original>KR</original>
    <variation>AA</variation>
    <location>
        <begin position="125"/>
        <end position="126"/>
    </location>
</feature>
<feature type="mutagenesis site" description="Does not affect ability to mediate lipid droplet fusion." evidence="17">
    <original>K</original>
    <variation>A</variation>
    <location>
        <position position="125"/>
    </location>
</feature>
<feature type="mutagenesis site" description="Does not affect ability to mediate lipid droplet fusion." evidence="17">
    <original>R</original>
    <variation>A</variation>
    <location>
        <position position="126"/>
    </location>
</feature>
<feature type="mutagenesis site" description="Abolished ability to mediate lipid droplet fusion." evidence="17">
    <original>Q</original>
    <variation>A</variation>
    <location>
        <position position="128"/>
    </location>
</feature>
<feature type="mutagenesis site" description="Abolished ability to mediate lipid droplet fusion." evidence="17">
    <original>A</original>
    <variation>F</variation>
    <variation>V</variation>
    <location>
        <position position="130"/>
    </location>
</feature>
<feature type="mutagenesis site" description="Abolished ability to mediate lipid droplet fusion." evidence="17">
    <original>L</original>
    <variation>A</variation>
    <location>
        <position position="131"/>
    </location>
</feature>
<feature type="mutagenesis site" description="Abolished ability to mediate lipid droplet fusion." evidence="17">
    <original>S</original>
    <variation>A</variation>
    <location>
        <position position="132"/>
    </location>
</feature>
<feature type="mutagenesis site" description="Abolished ability to mediate lipid droplet fusion." evidence="17">
    <original>K</original>
    <variation>A</variation>
    <location>
        <position position="134"/>
    </location>
</feature>
<feature type="mutagenesis site" description="Abolishes lipid droplet enlargement activity, but not localization to lipid droplets, nor enrichement at contact sites; when associated with A-186 and A-190." evidence="11">
    <original>K</original>
    <variation>A</variation>
    <location>
        <position position="182"/>
    </location>
</feature>
<feature type="mutagenesis site" description="Abolishes lipid droplet enlargement activity, but not localization to lipid droplets, nor enrichement at contact sites; when associated with A-182 and A-190." evidence="11">
    <original>K</original>
    <variation>A</variation>
    <location>
        <position position="186"/>
    </location>
</feature>
<feature type="mutagenesis site" description="Abolishes lipid droplet enlargement activity, but not localization to lipid droplets, nor enrichement at contact sites; when associated with A-182 and A-186." evidence="11">
    <original>R</original>
    <variation>A</variation>
    <location>
        <position position="190"/>
    </location>
</feature>
<feature type="mutagenesis site" description="No effect on protein stability; when associated with A-226. Drastically increased protein stability and decreased ubiquitination; when associated with A-226 and A-236." evidence="10">
    <original>K</original>
    <variation>A</variation>
    <location>
        <position position="224"/>
    </location>
</feature>
<feature type="mutagenesis site" description="No effect on protein stability; when associated with A-226. Drastically increased protein stability and decreased ubiquitination; when associated with A-224 and A-236." evidence="10">
    <original>K</original>
    <variation>A</variation>
    <location>
        <position position="226"/>
    </location>
</feature>
<feature type="mutagenesis site" description="No effect on protein stability. Drastically increased protein stability and decreased ubiquitination; when associated with A-224 and A-226." evidence="10">
    <original>K</original>
    <variation>A</variation>
    <location>
        <position position="236"/>
    </location>
</feature>
<feature type="sequence conflict" description="In Ref. 1; M61737." evidence="22" ref="1">
    <original>ML</original>
    <variation>IV</variation>
    <location>
        <begin position="188"/>
        <end position="189"/>
    </location>
</feature>
<feature type="strand" evidence="25">
    <location>
        <begin position="44"/>
        <end position="48"/>
    </location>
</feature>
<feature type="strand" evidence="25">
    <location>
        <begin position="55"/>
        <end position="59"/>
    </location>
</feature>
<feature type="helix" evidence="25">
    <location>
        <begin position="63"/>
        <end position="73"/>
    </location>
</feature>
<feature type="strand" evidence="25">
    <location>
        <begin position="82"/>
        <end position="85"/>
    </location>
</feature>
<feature type="turn" evidence="25">
    <location>
        <begin position="86"/>
        <end position="88"/>
    </location>
</feature>
<feature type="helix" evidence="25">
    <location>
        <begin position="95"/>
        <end position="100"/>
    </location>
</feature>
<feature type="strand" evidence="25">
    <location>
        <begin position="106"/>
        <end position="110"/>
    </location>
</feature>
<organism>
    <name type="scientific">Mus musculus</name>
    <name type="common">Mouse</name>
    <dbReference type="NCBI Taxonomy" id="10090"/>
    <lineage>
        <taxon>Eukaryota</taxon>
        <taxon>Metazoa</taxon>
        <taxon>Chordata</taxon>
        <taxon>Craniata</taxon>
        <taxon>Vertebrata</taxon>
        <taxon>Euteleostomi</taxon>
        <taxon>Mammalia</taxon>
        <taxon>Eutheria</taxon>
        <taxon>Euarchontoglires</taxon>
        <taxon>Glires</taxon>
        <taxon>Rodentia</taxon>
        <taxon>Myomorpha</taxon>
        <taxon>Muroidea</taxon>
        <taxon>Muridae</taxon>
        <taxon>Murinae</taxon>
        <taxon>Mus</taxon>
        <taxon>Mus</taxon>
    </lineage>
</organism>
<name>CIDEC_MOUSE</name>